<evidence type="ECO:0000255" key="1">
    <source>
        <dbReference type="HAMAP-Rule" id="MF_01845"/>
    </source>
</evidence>
<gene>
    <name type="ordered locus">CLD_2616</name>
</gene>
<sequence>MSRLSKEEISERLLELIKDETKPAIGCTEPVAVAFTVATGKKYMQGEILKIDLKVSKNILKNGKSVTIPNTEVCGLDIAGALGGICGDPEEGLFVFKNVNKDYLDKAREMIKNKVVTLNPIENTDPVFVEATLKGEKDEVIVILRRGHTNIEKVIVNGEIAFEKDNKNEKDNKDCDFMKELSLKDIREITEDISIEKLGFIMDGIEMNKEAAKEGLKRQKGLTLGSSLLKLQQEGKLGKDSATIARILTAAGSDLRMGGGMCPIMTSGGSGNQGLCVILPITVVAEDIKAPKEKLQRAVFFGHAVNNFVKKYTGKLSAICGCAIAAGIGATAGITWLLGGKDKEINGAILNMLANLTGMVCDGAKGSCAIKLSTSASEAVISAYLALNDIIVPNNTGIIGNTVEDTINNLGMLCKDGFYKADDVMLSIACKEVI</sequence>
<organism>
    <name type="scientific">Clostridium botulinum (strain Okra / Type B1)</name>
    <dbReference type="NCBI Taxonomy" id="498213"/>
    <lineage>
        <taxon>Bacteria</taxon>
        <taxon>Bacillati</taxon>
        <taxon>Bacillota</taxon>
        <taxon>Clostridia</taxon>
        <taxon>Eubacteriales</taxon>
        <taxon>Clostridiaceae</taxon>
        <taxon>Clostridium</taxon>
    </lineage>
</organism>
<proteinExistence type="inferred from homology"/>
<protein>
    <recommendedName>
        <fullName evidence="1">UPF0597 protein CLD_2616</fullName>
    </recommendedName>
</protein>
<feature type="chain" id="PRO_0000339802" description="UPF0597 protein CLD_2616">
    <location>
        <begin position="1"/>
        <end position="434"/>
    </location>
</feature>
<reference key="1">
    <citation type="journal article" date="2007" name="PLoS ONE">
        <title>Analysis of the neurotoxin complex genes in Clostridium botulinum A1-A4 and B1 strains: BoNT/A3, /Ba4 and /B1 clusters are located within plasmids.</title>
        <authorList>
            <person name="Smith T.J."/>
            <person name="Hill K.K."/>
            <person name="Foley B.T."/>
            <person name="Detter J.C."/>
            <person name="Munk A.C."/>
            <person name="Bruce D.C."/>
            <person name="Doggett N.A."/>
            <person name="Smith L.A."/>
            <person name="Marks J.D."/>
            <person name="Xie G."/>
            <person name="Brettin T.S."/>
        </authorList>
    </citation>
    <scope>NUCLEOTIDE SEQUENCE [LARGE SCALE GENOMIC DNA]</scope>
    <source>
        <strain>Okra / Type B1</strain>
    </source>
</reference>
<accession>B1INA3</accession>
<dbReference type="EMBL" id="CP000939">
    <property type="protein sequence ID" value="ACA44590.1"/>
    <property type="molecule type" value="Genomic_DNA"/>
</dbReference>
<dbReference type="RefSeq" id="WP_015957673.1">
    <property type="nucleotide sequence ID" value="NC_010516.1"/>
</dbReference>
<dbReference type="SMR" id="B1INA3"/>
<dbReference type="KEGG" id="cbb:CLD_2616"/>
<dbReference type="HOGENOM" id="CLU_051840_0_0_9"/>
<dbReference type="Proteomes" id="UP000008541">
    <property type="component" value="Chromosome"/>
</dbReference>
<dbReference type="GO" id="GO:0080146">
    <property type="term" value="F:L-cysteine desulfhydrase activity"/>
    <property type="evidence" value="ECO:0007669"/>
    <property type="project" value="TreeGrafter"/>
</dbReference>
<dbReference type="GO" id="GO:0019450">
    <property type="term" value="P:L-cysteine catabolic process to pyruvate"/>
    <property type="evidence" value="ECO:0007669"/>
    <property type="project" value="TreeGrafter"/>
</dbReference>
<dbReference type="HAMAP" id="MF_01845">
    <property type="entry name" value="UPF0597"/>
    <property type="match status" value="1"/>
</dbReference>
<dbReference type="InterPro" id="IPR005130">
    <property type="entry name" value="Ser_deHydtase-like_asu"/>
</dbReference>
<dbReference type="InterPro" id="IPR021144">
    <property type="entry name" value="UPF0597"/>
</dbReference>
<dbReference type="PANTHER" id="PTHR30501">
    <property type="entry name" value="UPF0597 PROTEIN YHAM"/>
    <property type="match status" value="1"/>
</dbReference>
<dbReference type="PANTHER" id="PTHR30501:SF2">
    <property type="entry name" value="UPF0597 PROTEIN YHAM"/>
    <property type="match status" value="1"/>
</dbReference>
<dbReference type="Pfam" id="PF03313">
    <property type="entry name" value="SDH_alpha"/>
    <property type="match status" value="1"/>
</dbReference>
<dbReference type="PIRSF" id="PIRSF006054">
    <property type="entry name" value="UCP006054"/>
    <property type="match status" value="1"/>
</dbReference>
<name>Y2616_CLOBK</name>
<comment type="similarity">
    <text evidence="1">Belongs to the UPF0597 family.</text>
</comment>